<gene>
    <name evidence="6" type="primary">lsy-27</name>
    <name evidence="6" type="ORF">F47H4.1</name>
</gene>
<protein>
    <recommendedName>
        <fullName evidence="4">Zinc finger protein lsy-27</fullName>
    </recommendedName>
</protein>
<name>LSY27_CAEEL</name>
<proteinExistence type="evidence at protein level"/>
<sequence length="250" mass="27806">MTSIHSPVTRKEDTELKRPDLRGKFVCSSCSQNFQHSASLNRHRQLMHSNEHTCMMCERALNQKETIREHMRNEHNLAQVFTCGCCNWTFASKRQLTEHTKCIQGTGAPGDTIPIAKSINAPGSLIQSTIQGTPPVVKTGRKRPMGGSLSPSSSVSTSISSRDASGSPPPTEEEAERKVLFDNAVDTILQSKFFTYQQITEVDTWVKIIESANTLADTLQRIKKSQKVKAEGPAVESKMIPEKHVKQEIE</sequence>
<evidence type="ECO:0000255" key="1">
    <source>
        <dbReference type="PROSITE-ProRule" id="PRU00042"/>
    </source>
</evidence>
<evidence type="ECO:0000256" key="2">
    <source>
        <dbReference type="SAM" id="MobiDB-lite"/>
    </source>
</evidence>
<evidence type="ECO:0000269" key="3">
    <source>
    </source>
</evidence>
<evidence type="ECO:0000305" key="4"/>
<evidence type="ECO:0000312" key="5">
    <source>
        <dbReference type="Proteomes" id="UP000001940"/>
    </source>
</evidence>
<evidence type="ECO:0000312" key="6">
    <source>
        <dbReference type="WormBase" id="F47H4.1a"/>
    </source>
</evidence>
<evidence type="ECO:0000312" key="7">
    <source>
        <dbReference type="WormBase" id="F47H4.1b"/>
    </source>
</evidence>
<accession>O45526</accession>
<accession>H9G332</accession>
<reference evidence="5" key="1">
    <citation type="journal article" date="1998" name="Science">
        <title>Genome sequence of the nematode C. elegans: a platform for investigating biology.</title>
        <authorList>
            <consortium name="The C. elegans sequencing consortium"/>
        </authorList>
    </citation>
    <scope>NUCLEOTIDE SEQUENCE [LARGE SCALE GENOMIC DNA]</scope>
    <source>
        <strain evidence="5">Bristol N2</strain>
    </source>
</reference>
<reference evidence="4" key="2">
    <citation type="journal article" date="2011" name="Genetics">
        <title>A left/right asymmetric neuronal differentiation program is controlled by the Caenorhabditis elegans lsy-27 zinc-finger transcription factor.</title>
        <authorList>
            <person name="Zhang F."/>
            <person name="O'Meara M.M."/>
            <person name="Hobert O."/>
        </authorList>
    </citation>
    <scope>FUNCTION</scope>
    <scope>DEVELOPMENTAL STAGE</scope>
    <scope>MUTAGENESIS OF SER-148</scope>
</reference>
<organism evidence="5">
    <name type="scientific">Caenorhabditis elegans</name>
    <dbReference type="NCBI Taxonomy" id="6239"/>
    <lineage>
        <taxon>Eukaryota</taxon>
        <taxon>Metazoa</taxon>
        <taxon>Ecdysozoa</taxon>
        <taxon>Nematoda</taxon>
        <taxon>Chromadorea</taxon>
        <taxon>Rhabditida</taxon>
        <taxon>Rhabditina</taxon>
        <taxon>Rhabditomorpha</taxon>
        <taxon>Rhabditoidea</taxon>
        <taxon>Rhabditidae</taxon>
        <taxon>Peloderinae</taxon>
        <taxon>Caenorhabditis</taxon>
    </lineage>
</organism>
<feature type="chain" id="PRO_0000454831" description="Zinc finger protein lsy-27">
    <location>
        <begin position="1"/>
        <end position="250"/>
    </location>
</feature>
<feature type="zinc finger region" description="C2H2-type 1" evidence="1">
    <location>
        <begin position="25"/>
        <end position="48"/>
    </location>
</feature>
<feature type="zinc finger region" description="C2H2-type 2" evidence="1">
    <location>
        <begin position="52"/>
        <end position="75"/>
    </location>
</feature>
<feature type="zinc finger region" description="C2H2-type 3; degenerate" evidence="1">
    <location>
        <begin position="81"/>
        <end position="104"/>
    </location>
</feature>
<feature type="region of interest" description="Disordered" evidence="2">
    <location>
        <begin position="126"/>
        <end position="177"/>
    </location>
</feature>
<feature type="region of interest" description="Disordered" evidence="2">
    <location>
        <begin position="226"/>
        <end position="250"/>
    </location>
</feature>
<feature type="compositionally biased region" description="Low complexity" evidence="2">
    <location>
        <begin position="148"/>
        <end position="165"/>
    </location>
</feature>
<feature type="compositionally biased region" description="Basic and acidic residues" evidence="2">
    <location>
        <begin position="239"/>
        <end position="250"/>
    </location>
</feature>
<feature type="splice variant" id="VSP_061399" description="In isoform b." evidence="4">
    <location>
        <begin position="1"/>
        <end position="46"/>
    </location>
</feature>
<feature type="mutagenesis site" description="In ot108; defects in left/right asymmetry in the gustatory ASE neurons. Significantly reduced expression of LIM homeobox protein lim-6." evidence="3">
    <original>S</original>
    <variation>L</variation>
    <location>
        <position position="148"/>
    </location>
</feature>
<comment type="function">
    <text evidence="3">Involved in regulating left/right asymmetric differentiation of the gustatory ASE neurons (PubMed:21555395). Plays a role in modulating expression of LIM/homeobox protein lim-6 (PubMed:21555395).</text>
</comment>
<comment type="alternative products">
    <event type="alternative splicing"/>
    <isoform>
        <id>O45526-1</id>
        <name evidence="6">a</name>
        <sequence type="displayed"/>
    </isoform>
    <isoform>
        <id>O45526-2</id>
        <name evidence="7">b</name>
        <sequence type="described" ref="VSP_061399"/>
    </isoform>
</comment>
<comment type="developmental stage">
    <text evidence="3">Expressed very broadly throughout the embryo, from the one-cell stage until the comma stage, when expression diminishes, and is not observed after hatching in larvae or in adults (PubMed:21555395). Expressed in both ASE neurons in the comma-stage embryo (PubMed:21555395).</text>
</comment>
<keyword id="KW-0025">Alternative splicing</keyword>
<keyword id="KW-0479">Metal-binding</keyword>
<keyword id="KW-1185">Reference proteome</keyword>
<keyword id="KW-0677">Repeat</keyword>
<keyword id="KW-0862">Zinc</keyword>
<keyword id="KW-0863">Zinc-finger</keyword>
<dbReference type="EMBL" id="BX284605">
    <property type="protein sequence ID" value="CAB07203.1"/>
    <property type="molecule type" value="Genomic_DNA"/>
</dbReference>
<dbReference type="EMBL" id="BX284605">
    <property type="protein sequence ID" value="CCG28095.1"/>
    <property type="molecule type" value="Genomic_DNA"/>
</dbReference>
<dbReference type="PIR" id="T22368">
    <property type="entry name" value="T22368"/>
</dbReference>
<dbReference type="RefSeq" id="NP_001256739.1">
    <molecule id="O45526-1"/>
    <property type="nucleotide sequence ID" value="NM_001269810.2"/>
</dbReference>
<dbReference type="RefSeq" id="NP_001256740.1">
    <molecule id="O45526-2"/>
    <property type="nucleotide sequence ID" value="NM_001269811.3"/>
</dbReference>
<dbReference type="DIP" id="DIP-26919N"/>
<dbReference type="FunCoup" id="O45526">
    <property type="interactions" value="266"/>
</dbReference>
<dbReference type="IntAct" id="O45526">
    <property type="interactions" value="1"/>
</dbReference>
<dbReference type="STRING" id="6239.F47H4.1a.1"/>
<dbReference type="PaxDb" id="6239-F47H4.1a"/>
<dbReference type="EnsemblMetazoa" id="F47H4.1a.1">
    <molecule id="O45526-1"/>
    <property type="protein sequence ID" value="F47H4.1a.1"/>
    <property type="gene ID" value="WBGene00009834"/>
</dbReference>
<dbReference type="EnsemblMetazoa" id="F47H4.1b.1">
    <molecule id="O45526-2"/>
    <property type="protein sequence ID" value="F47H4.1b.1"/>
    <property type="gene ID" value="WBGene00009834"/>
</dbReference>
<dbReference type="GeneID" id="180149"/>
<dbReference type="KEGG" id="cel:CELE_F47H4.1"/>
<dbReference type="UCSC" id="F47H4.1">
    <molecule id="O45526-1"/>
    <property type="organism name" value="c. elegans"/>
</dbReference>
<dbReference type="AGR" id="WB:WBGene00009834"/>
<dbReference type="CTD" id="180149"/>
<dbReference type="WormBase" id="F47H4.1a">
    <molecule id="O45526-1"/>
    <property type="protein sequence ID" value="CE16062"/>
    <property type="gene ID" value="WBGene00009834"/>
    <property type="gene designation" value="lsy-27"/>
</dbReference>
<dbReference type="WormBase" id="F47H4.1b">
    <molecule id="O45526-2"/>
    <property type="protein sequence ID" value="CE47185"/>
    <property type="gene ID" value="WBGene00009834"/>
    <property type="gene designation" value="lsy-27"/>
</dbReference>
<dbReference type="eggNOG" id="KOG1721">
    <property type="taxonomic scope" value="Eukaryota"/>
</dbReference>
<dbReference type="GeneTree" id="ENSGT00970000195965"/>
<dbReference type="HOGENOM" id="CLU_098769_0_0_1"/>
<dbReference type="InParanoid" id="O45526"/>
<dbReference type="OMA" id="MCERALN"/>
<dbReference type="OrthoDB" id="6077919at2759"/>
<dbReference type="PhylomeDB" id="O45526"/>
<dbReference type="PRO" id="PR:O45526"/>
<dbReference type="Proteomes" id="UP000001940">
    <property type="component" value="Chromosome V"/>
</dbReference>
<dbReference type="Bgee" id="WBGene00009834">
    <property type="expression patterns" value="Expressed in embryo and 4 other cell types or tissues"/>
</dbReference>
<dbReference type="ExpressionAtlas" id="O45526">
    <property type="expression patterns" value="baseline and differential"/>
</dbReference>
<dbReference type="GO" id="GO:0005634">
    <property type="term" value="C:nucleus"/>
    <property type="evidence" value="ECO:0000318"/>
    <property type="project" value="GO_Central"/>
</dbReference>
<dbReference type="GO" id="GO:0000981">
    <property type="term" value="F:DNA-binding transcription factor activity, RNA polymerase II-specific"/>
    <property type="evidence" value="ECO:0000318"/>
    <property type="project" value="GO_Central"/>
</dbReference>
<dbReference type="GO" id="GO:0043565">
    <property type="term" value="F:sequence-specific DNA binding"/>
    <property type="evidence" value="ECO:0000318"/>
    <property type="project" value="GO_Central"/>
</dbReference>
<dbReference type="GO" id="GO:0008270">
    <property type="term" value="F:zinc ion binding"/>
    <property type="evidence" value="ECO:0007669"/>
    <property type="project" value="UniProtKB-KW"/>
</dbReference>
<dbReference type="GO" id="GO:0030182">
    <property type="term" value="P:neuron differentiation"/>
    <property type="evidence" value="ECO:0000315"/>
    <property type="project" value="UniProtKB"/>
</dbReference>
<dbReference type="GO" id="GO:0006355">
    <property type="term" value="P:regulation of DNA-templated transcription"/>
    <property type="evidence" value="ECO:0000315"/>
    <property type="project" value="UniProtKB"/>
</dbReference>
<dbReference type="GO" id="GO:0006357">
    <property type="term" value="P:regulation of transcription by RNA polymerase II"/>
    <property type="evidence" value="ECO:0000318"/>
    <property type="project" value="GO_Central"/>
</dbReference>
<dbReference type="Gene3D" id="3.30.160.60">
    <property type="entry name" value="Classic Zinc Finger"/>
    <property type="match status" value="1"/>
</dbReference>
<dbReference type="InterPro" id="IPR036236">
    <property type="entry name" value="Znf_C2H2_sf"/>
</dbReference>
<dbReference type="InterPro" id="IPR013087">
    <property type="entry name" value="Znf_C2H2_type"/>
</dbReference>
<dbReference type="PANTHER" id="PTHR24408:SF63">
    <property type="entry name" value="C2H2-TYPE DOMAIN-CONTAINING PROTEIN-RELATED"/>
    <property type="match status" value="1"/>
</dbReference>
<dbReference type="PANTHER" id="PTHR24408">
    <property type="entry name" value="ZINC FINGER PROTEIN"/>
    <property type="match status" value="1"/>
</dbReference>
<dbReference type="SMART" id="SM00355">
    <property type="entry name" value="ZnF_C2H2"/>
    <property type="match status" value="3"/>
</dbReference>
<dbReference type="SUPFAM" id="SSF57667">
    <property type="entry name" value="beta-beta-alpha zinc fingers"/>
    <property type="match status" value="1"/>
</dbReference>
<dbReference type="PROSITE" id="PS00028">
    <property type="entry name" value="ZINC_FINGER_C2H2_1"/>
    <property type="match status" value="2"/>
</dbReference>
<dbReference type="PROSITE" id="PS50157">
    <property type="entry name" value="ZINC_FINGER_C2H2_2"/>
    <property type="match status" value="3"/>
</dbReference>